<sequence length="450" mass="49184">MLSILWNLAAFIIALGVLITVHEFGHFWVARRCGVRVERFSIGFGKALWRRTDRYGTEYVIALIPLGGYVKMLDERAEPVAPELRRHAFNNKTVGQRAAIIAAGPVANFIFAIFAYWLVFIIGVPGVRPVIGEITPNSIAAQAQIAPGTELKAVDGIETPDWDAVRLQLVSKIGDQQTTVSVAPFGSDQRQDKTLDLRHWAFEPDKQDPVSSLGIRPRGPQIEPVLSEVQANSAASKAGLQAGDRIVKVDGQPLTQWMKFVTFVRDNPGKPLALEIERQGSALSLTLTPDTKSVNGKAEGFAGVVPKIIPLPEEYKTIRQYGPFSAILEATDKTWQLMKLTVSMLGKLITGDVKLNNLSGPISIAQGAGMSAEFGVIYYLMFLALISVNLGIINLFPLPVLDGGHLLFLAIEKLKGGPVSERVQDFSYRIGSILLVLLMGLALFNDFSRL</sequence>
<gene>
    <name type="primary">rsep</name>
    <name type="synonym">yaeL</name>
    <name type="ordered locus">STM14_0265</name>
</gene>
<protein>
    <recommendedName>
        <fullName>Regulator of sigma-E protease RseP</fullName>
        <ecNumber>3.4.24.-</ecNumber>
    </recommendedName>
    <alternativeName>
        <fullName>S2P endopeptidase</fullName>
    </alternativeName>
    <alternativeName>
        <fullName>Site-2 protease RseP</fullName>
        <shortName>S2P protease RseP</shortName>
    </alternativeName>
    <alternativeName>
        <fullName>Site-2-type intramembrane protease</fullName>
    </alternativeName>
</protein>
<reference key="1">
    <citation type="journal article" date="2010" name="J. Bacteriol.">
        <title>Short-term signatures of evolutionary change in the Salmonella enterica serovar typhimurium 14028 genome.</title>
        <authorList>
            <person name="Jarvik T."/>
            <person name="Smillie C."/>
            <person name="Groisman E.A."/>
            <person name="Ochman H."/>
        </authorList>
    </citation>
    <scope>NUCLEOTIDE SEQUENCE [LARGE SCALE GENOMIC DNA]</scope>
    <source>
        <strain>14028s / SGSC 2262</strain>
    </source>
</reference>
<reference key="2">
    <citation type="journal article" date="2009" name="Mol. Microbiol.">
        <title>Acid stress activation of the sigma(E) stress response in Salmonella enterica serovar Typhimurium.</title>
        <authorList>
            <person name="Muller C."/>
            <person name="Bang I.S."/>
            <person name="Velayudhan J."/>
            <person name="Karlinsey J."/>
            <person name="Papenfort K."/>
            <person name="Vogel J."/>
            <person name="Fang F.C."/>
        </authorList>
    </citation>
    <scope>FUNCTION</scope>
    <scope>DOMAIN</scope>
    <scope>DISRUPTION PHENOTYPE</scope>
    <source>
        <strain>14028s / SGSC 2262</strain>
    </source>
</reference>
<dbReference type="EC" id="3.4.24.-"/>
<dbReference type="EMBL" id="CP001363">
    <property type="protein sequence ID" value="ACY86799.1"/>
    <property type="molecule type" value="Genomic_DNA"/>
</dbReference>
<dbReference type="RefSeq" id="WP_000949017.1">
    <property type="nucleotide sequence ID" value="NZ_CP043402.1"/>
</dbReference>
<dbReference type="SMR" id="D0ZKX9"/>
<dbReference type="KEGG" id="seo:STM14_0265"/>
<dbReference type="PATRIC" id="fig|588858.6.peg.373"/>
<dbReference type="HOGENOM" id="CLU_025778_0_2_6"/>
<dbReference type="BioCyc" id="SENT588858:STM14_RS01700-MONOMER"/>
<dbReference type="Proteomes" id="UP000002695">
    <property type="component" value="Chromosome"/>
</dbReference>
<dbReference type="GO" id="GO:0005886">
    <property type="term" value="C:plasma membrane"/>
    <property type="evidence" value="ECO:0007669"/>
    <property type="project" value="UniProtKB-SubCell"/>
</dbReference>
<dbReference type="GO" id="GO:0046872">
    <property type="term" value="F:metal ion binding"/>
    <property type="evidence" value="ECO:0007669"/>
    <property type="project" value="UniProtKB-KW"/>
</dbReference>
<dbReference type="GO" id="GO:0004222">
    <property type="term" value="F:metalloendopeptidase activity"/>
    <property type="evidence" value="ECO:0007669"/>
    <property type="project" value="InterPro"/>
</dbReference>
<dbReference type="GO" id="GO:0097533">
    <property type="term" value="P:cellular stress response to acid chemical"/>
    <property type="evidence" value="ECO:0000315"/>
    <property type="project" value="UniProtKB"/>
</dbReference>
<dbReference type="GO" id="GO:0006508">
    <property type="term" value="P:proteolysis"/>
    <property type="evidence" value="ECO:0000315"/>
    <property type="project" value="UniProtKB"/>
</dbReference>
<dbReference type="GO" id="GO:0009266">
    <property type="term" value="P:response to temperature stimulus"/>
    <property type="evidence" value="ECO:0000315"/>
    <property type="project" value="UniProtKB"/>
</dbReference>
<dbReference type="CDD" id="cd23082">
    <property type="entry name" value="cpPDZ1_EcRseP-like"/>
    <property type="match status" value="1"/>
</dbReference>
<dbReference type="CDD" id="cd23083">
    <property type="entry name" value="cpPDZ2_EcRseP-like"/>
    <property type="match status" value="1"/>
</dbReference>
<dbReference type="CDD" id="cd06163">
    <property type="entry name" value="S2P-M50_PDZ_RseP-like"/>
    <property type="match status" value="1"/>
</dbReference>
<dbReference type="FunFam" id="2.30.42.10:FF:000094">
    <property type="entry name" value="Zinc metalloprotease"/>
    <property type="match status" value="1"/>
</dbReference>
<dbReference type="FunFam" id="2.30.42.10:FF:000095">
    <property type="entry name" value="Zinc metalloprotease"/>
    <property type="match status" value="1"/>
</dbReference>
<dbReference type="Gene3D" id="2.30.42.10">
    <property type="match status" value="2"/>
</dbReference>
<dbReference type="InterPro" id="IPR001478">
    <property type="entry name" value="PDZ"/>
</dbReference>
<dbReference type="InterPro" id="IPR041489">
    <property type="entry name" value="PDZ_6"/>
</dbReference>
<dbReference type="InterPro" id="IPR036034">
    <property type="entry name" value="PDZ_sf"/>
</dbReference>
<dbReference type="InterPro" id="IPR004387">
    <property type="entry name" value="Pept_M50_Zn"/>
</dbReference>
<dbReference type="InterPro" id="IPR008915">
    <property type="entry name" value="Peptidase_M50"/>
</dbReference>
<dbReference type="NCBIfam" id="NF008046">
    <property type="entry name" value="PRK10779.1"/>
    <property type="match status" value="1"/>
</dbReference>
<dbReference type="NCBIfam" id="TIGR00054">
    <property type="entry name" value="RIP metalloprotease RseP"/>
    <property type="match status" value="1"/>
</dbReference>
<dbReference type="PANTHER" id="PTHR42837:SF2">
    <property type="entry name" value="MEMBRANE METALLOPROTEASE ARASP2, CHLOROPLASTIC-RELATED"/>
    <property type="match status" value="1"/>
</dbReference>
<dbReference type="PANTHER" id="PTHR42837">
    <property type="entry name" value="REGULATOR OF SIGMA-E PROTEASE RSEP"/>
    <property type="match status" value="1"/>
</dbReference>
<dbReference type="Pfam" id="PF17820">
    <property type="entry name" value="PDZ_6"/>
    <property type="match status" value="1"/>
</dbReference>
<dbReference type="Pfam" id="PF02163">
    <property type="entry name" value="Peptidase_M50"/>
    <property type="match status" value="1"/>
</dbReference>
<dbReference type="SMART" id="SM00228">
    <property type="entry name" value="PDZ"/>
    <property type="match status" value="2"/>
</dbReference>
<dbReference type="SUPFAM" id="SSF50156">
    <property type="entry name" value="PDZ domain-like"/>
    <property type="match status" value="2"/>
</dbReference>
<dbReference type="PROSITE" id="PS50106">
    <property type="entry name" value="PDZ"/>
    <property type="match status" value="1"/>
</dbReference>
<dbReference type="PROSITE" id="PS00142">
    <property type="entry name" value="ZINC_PROTEASE"/>
    <property type="match status" value="1"/>
</dbReference>
<evidence type="ECO:0000250" key="1"/>
<evidence type="ECO:0000255" key="2"/>
<evidence type="ECO:0000255" key="3">
    <source>
        <dbReference type="PROSITE-ProRule" id="PRU00143"/>
    </source>
</evidence>
<evidence type="ECO:0000255" key="4">
    <source>
        <dbReference type="PROSITE-ProRule" id="PRU10095"/>
    </source>
</evidence>
<evidence type="ECO:0000269" key="5">
    <source>
    </source>
</evidence>
<evidence type="ECO:0000305" key="6"/>
<comment type="function">
    <text evidence="5">A site-2 regulated intramembrane protease that cleaves the peptide bond between 'Ala-108' and 'Cys-109' in the transmembrane region of RseA. Part of a regulated intramembrane proteolysis (RIP) cascade. Acts on DegS-cleaved RseA to release the cytoplasmic domain of RseA. This provides the cell with sigma-E (RpoE) activity through the proteolysis of RseA.</text>
</comment>
<comment type="cofactor">
    <cofactor evidence="1">
        <name>Zn(2+)</name>
        <dbReference type="ChEBI" id="CHEBI:29105"/>
    </cofactor>
</comment>
<comment type="subcellular location">
    <subcellularLocation>
        <location evidence="6">Cell inner membrane</location>
        <topology evidence="6">Multi-pass membrane protein</topology>
    </subcellularLocation>
</comment>
<comment type="domain">
    <text evidence="5">Deletion of the PDZ domains leads to dis-inhibition of protease activity and almost complete loss of RseA even under non-inducing conditions.</text>
</comment>
<comment type="disruption phenotype">
    <text evidence="5">Not essential. Normal levels of sigma-E function at pH 7.0, loss of acid stress induction of sigma-E. 100-fold decreased survival in acidified murine macrophages.</text>
</comment>
<comment type="miscellaneous">
    <text evidence="1">Regulated intramembrane proteolysis (RIP) occurs when an extracytoplasmic signal triggers a concerted proteolytic cascade to transmit information and elicit cellular responses. A membrane-spanning regulatory substrate protein is first cut extracytoplasmically (site-1 protease, S1P), then within the membrane itself (site-2 protease, S2P, this enzyme), while cytoplasmic proteases finish degrading the regulatory protein, liberating the effector protein (By similarity).</text>
</comment>
<comment type="similarity">
    <text evidence="6">Belongs to the peptidase M50B family.</text>
</comment>
<organism>
    <name type="scientific">Salmonella typhimurium (strain 14028s / SGSC 2262)</name>
    <dbReference type="NCBI Taxonomy" id="588858"/>
    <lineage>
        <taxon>Bacteria</taxon>
        <taxon>Pseudomonadati</taxon>
        <taxon>Pseudomonadota</taxon>
        <taxon>Gammaproteobacteria</taxon>
        <taxon>Enterobacterales</taxon>
        <taxon>Enterobacteriaceae</taxon>
        <taxon>Salmonella</taxon>
    </lineage>
</organism>
<keyword id="KW-0997">Cell inner membrane</keyword>
<keyword id="KW-1003">Cell membrane</keyword>
<keyword id="KW-0378">Hydrolase</keyword>
<keyword id="KW-0472">Membrane</keyword>
<keyword id="KW-0479">Metal-binding</keyword>
<keyword id="KW-0482">Metalloprotease</keyword>
<keyword id="KW-0645">Protease</keyword>
<keyword id="KW-0677">Repeat</keyword>
<keyword id="KW-0346">Stress response</keyword>
<keyword id="KW-0812">Transmembrane</keyword>
<keyword id="KW-1133">Transmembrane helix</keyword>
<keyword id="KW-0843">Virulence</keyword>
<keyword id="KW-0862">Zinc</keyword>
<accession>D0ZKX9</accession>
<name>RSEP_SALT1</name>
<proteinExistence type="inferred from homology"/>
<feature type="chain" id="PRO_0000424887" description="Regulator of sigma-E protease RseP">
    <location>
        <begin position="1"/>
        <end position="450"/>
    </location>
</feature>
<feature type="transmembrane region" description="Helical" evidence="2">
    <location>
        <begin position="1"/>
        <end position="21"/>
    </location>
</feature>
<feature type="topological domain" description="Periplasmic" evidence="2">
    <location>
        <begin position="22"/>
        <end position="103"/>
    </location>
</feature>
<feature type="transmembrane region" description="Helical" evidence="2">
    <location>
        <begin position="104"/>
        <end position="124"/>
    </location>
</feature>
<feature type="topological domain" description="Cytoplasmic" evidence="2">
    <location>
        <begin position="125"/>
        <end position="375"/>
    </location>
</feature>
<feature type="transmembrane region" description="Helical" evidence="2">
    <location>
        <begin position="376"/>
        <end position="396"/>
    </location>
</feature>
<feature type="topological domain" description="Periplasmic" evidence="2">
    <location>
        <begin position="397"/>
        <end position="429"/>
    </location>
</feature>
<feature type="transmembrane region" description="Helical" evidence="2">
    <location>
        <begin position="430"/>
        <end position="450"/>
    </location>
</feature>
<feature type="domain" description="PDZ 1" evidence="3">
    <location>
        <begin position="115"/>
        <end position="186"/>
    </location>
</feature>
<feature type="domain" description="PDZ 2" evidence="3">
    <location>
        <begin position="199"/>
        <end position="291"/>
    </location>
</feature>
<feature type="active site" evidence="4">
    <location>
        <position position="23"/>
    </location>
</feature>
<feature type="binding site" evidence="4">
    <location>
        <position position="22"/>
    </location>
    <ligand>
        <name>Zn(2+)</name>
        <dbReference type="ChEBI" id="CHEBI:29105"/>
        <note>catalytic</note>
    </ligand>
</feature>
<feature type="binding site" evidence="4">
    <location>
        <position position="26"/>
    </location>
    <ligand>
        <name>Zn(2+)</name>
        <dbReference type="ChEBI" id="CHEBI:29105"/>
        <note>catalytic</note>
    </ligand>
</feature>